<organism>
    <name type="scientific">Thiobacillus denitrificans (strain ATCC 25259 / T1)</name>
    <dbReference type="NCBI Taxonomy" id="292415"/>
    <lineage>
        <taxon>Bacteria</taxon>
        <taxon>Pseudomonadati</taxon>
        <taxon>Pseudomonadota</taxon>
        <taxon>Betaproteobacteria</taxon>
        <taxon>Nitrosomonadales</taxon>
        <taxon>Thiobacillaceae</taxon>
        <taxon>Thiobacillus</taxon>
    </lineage>
</organism>
<protein>
    <recommendedName>
        <fullName evidence="1">4-diphosphocytidyl-2-C-methyl-D-erythritol kinase</fullName>
        <shortName evidence="1">CMK</shortName>
        <ecNumber evidence="1">2.7.1.148</ecNumber>
    </recommendedName>
    <alternativeName>
        <fullName evidence="1">4-(cytidine-5'-diphospho)-2-C-methyl-D-erythritol kinase</fullName>
    </alternativeName>
</protein>
<gene>
    <name evidence="1" type="primary">ispE</name>
    <name type="ordered locus">Tbd_0386</name>
</gene>
<accession>Q3SLR6</accession>
<feature type="chain" id="PRO_0000235148" description="4-diphosphocytidyl-2-C-methyl-D-erythritol kinase">
    <location>
        <begin position="1"/>
        <end position="278"/>
    </location>
</feature>
<feature type="active site" evidence="1">
    <location>
        <position position="10"/>
    </location>
</feature>
<feature type="active site" evidence="1">
    <location>
        <position position="135"/>
    </location>
</feature>
<feature type="binding site" evidence="1">
    <location>
        <begin position="93"/>
        <end position="103"/>
    </location>
    <ligand>
        <name>ATP</name>
        <dbReference type="ChEBI" id="CHEBI:30616"/>
    </ligand>
</feature>
<proteinExistence type="inferred from homology"/>
<dbReference type="EC" id="2.7.1.148" evidence="1"/>
<dbReference type="EMBL" id="CP000116">
    <property type="protein sequence ID" value="AAZ96339.1"/>
    <property type="molecule type" value="Genomic_DNA"/>
</dbReference>
<dbReference type="RefSeq" id="WP_011310899.1">
    <property type="nucleotide sequence ID" value="NC_007404.1"/>
</dbReference>
<dbReference type="SMR" id="Q3SLR6"/>
<dbReference type="STRING" id="292415.Tbd_0386"/>
<dbReference type="KEGG" id="tbd:Tbd_0386"/>
<dbReference type="eggNOG" id="COG1947">
    <property type="taxonomic scope" value="Bacteria"/>
</dbReference>
<dbReference type="HOGENOM" id="CLU_053057_3_0_4"/>
<dbReference type="OrthoDB" id="9809438at2"/>
<dbReference type="UniPathway" id="UPA00056">
    <property type="reaction ID" value="UER00094"/>
</dbReference>
<dbReference type="Proteomes" id="UP000008291">
    <property type="component" value="Chromosome"/>
</dbReference>
<dbReference type="GO" id="GO:0050515">
    <property type="term" value="F:4-(cytidine 5'-diphospho)-2-C-methyl-D-erythritol kinase activity"/>
    <property type="evidence" value="ECO:0007669"/>
    <property type="project" value="UniProtKB-UniRule"/>
</dbReference>
<dbReference type="GO" id="GO:0005524">
    <property type="term" value="F:ATP binding"/>
    <property type="evidence" value="ECO:0007669"/>
    <property type="project" value="UniProtKB-UniRule"/>
</dbReference>
<dbReference type="GO" id="GO:0019288">
    <property type="term" value="P:isopentenyl diphosphate biosynthetic process, methylerythritol 4-phosphate pathway"/>
    <property type="evidence" value="ECO:0007669"/>
    <property type="project" value="UniProtKB-UniRule"/>
</dbReference>
<dbReference type="GO" id="GO:0016114">
    <property type="term" value="P:terpenoid biosynthetic process"/>
    <property type="evidence" value="ECO:0007669"/>
    <property type="project" value="InterPro"/>
</dbReference>
<dbReference type="Gene3D" id="3.30.230.10">
    <property type="match status" value="1"/>
</dbReference>
<dbReference type="Gene3D" id="3.30.70.890">
    <property type="entry name" value="GHMP kinase, C-terminal domain"/>
    <property type="match status" value="1"/>
</dbReference>
<dbReference type="HAMAP" id="MF_00061">
    <property type="entry name" value="IspE"/>
    <property type="match status" value="1"/>
</dbReference>
<dbReference type="InterPro" id="IPR013750">
    <property type="entry name" value="GHMP_kinase_C_dom"/>
</dbReference>
<dbReference type="InterPro" id="IPR036554">
    <property type="entry name" value="GHMP_kinase_C_sf"/>
</dbReference>
<dbReference type="InterPro" id="IPR006204">
    <property type="entry name" value="GHMP_kinase_N_dom"/>
</dbReference>
<dbReference type="InterPro" id="IPR004424">
    <property type="entry name" value="IspE"/>
</dbReference>
<dbReference type="InterPro" id="IPR020568">
    <property type="entry name" value="Ribosomal_Su5_D2-typ_SF"/>
</dbReference>
<dbReference type="InterPro" id="IPR014721">
    <property type="entry name" value="Ribsml_uS5_D2-typ_fold_subgr"/>
</dbReference>
<dbReference type="NCBIfam" id="TIGR00154">
    <property type="entry name" value="ispE"/>
    <property type="match status" value="1"/>
</dbReference>
<dbReference type="PANTHER" id="PTHR43527">
    <property type="entry name" value="4-DIPHOSPHOCYTIDYL-2-C-METHYL-D-ERYTHRITOL KINASE, CHLOROPLASTIC"/>
    <property type="match status" value="1"/>
</dbReference>
<dbReference type="PANTHER" id="PTHR43527:SF2">
    <property type="entry name" value="4-DIPHOSPHOCYTIDYL-2-C-METHYL-D-ERYTHRITOL KINASE, CHLOROPLASTIC"/>
    <property type="match status" value="1"/>
</dbReference>
<dbReference type="Pfam" id="PF08544">
    <property type="entry name" value="GHMP_kinases_C"/>
    <property type="match status" value="1"/>
</dbReference>
<dbReference type="Pfam" id="PF00288">
    <property type="entry name" value="GHMP_kinases_N"/>
    <property type="match status" value="1"/>
</dbReference>
<dbReference type="PIRSF" id="PIRSF010376">
    <property type="entry name" value="IspE"/>
    <property type="match status" value="1"/>
</dbReference>
<dbReference type="SUPFAM" id="SSF55060">
    <property type="entry name" value="GHMP Kinase, C-terminal domain"/>
    <property type="match status" value="1"/>
</dbReference>
<dbReference type="SUPFAM" id="SSF54211">
    <property type="entry name" value="Ribosomal protein S5 domain 2-like"/>
    <property type="match status" value="1"/>
</dbReference>
<sequence>MSQAFPAPAKLNLFLHVVGRRDDGYHLLQSVFRLIDRADTVHLELRDDGRIVREGALPGVSEDQDLTVRAARLLQPYARPGAGVGIRLDKRLPMGGGLGGGSSDAATVLLALNRLWEVDLPRQRLQALALRLGADVPVFVFGQTAFAEGVGELLQPIGAPVAWYVVLTPPVHVPTAAIFAAPELTRNTPALKIAPFSAGMGHNDLEPVVVGRYPEVGRHLQWLGQFGEARMTGSGACVFASFATEDAARSVLQALPDTMQGFVARGLDKHPLYDFVPE</sequence>
<name>ISPE_THIDA</name>
<evidence type="ECO:0000255" key="1">
    <source>
        <dbReference type="HAMAP-Rule" id="MF_00061"/>
    </source>
</evidence>
<comment type="function">
    <text evidence="1">Catalyzes the phosphorylation of the position 2 hydroxy group of 4-diphosphocytidyl-2C-methyl-D-erythritol.</text>
</comment>
<comment type="catalytic activity">
    <reaction evidence="1">
        <text>4-CDP-2-C-methyl-D-erythritol + ATP = 4-CDP-2-C-methyl-D-erythritol 2-phosphate + ADP + H(+)</text>
        <dbReference type="Rhea" id="RHEA:18437"/>
        <dbReference type="ChEBI" id="CHEBI:15378"/>
        <dbReference type="ChEBI" id="CHEBI:30616"/>
        <dbReference type="ChEBI" id="CHEBI:57823"/>
        <dbReference type="ChEBI" id="CHEBI:57919"/>
        <dbReference type="ChEBI" id="CHEBI:456216"/>
        <dbReference type="EC" id="2.7.1.148"/>
    </reaction>
</comment>
<comment type="pathway">
    <text evidence="1">Isoprenoid biosynthesis; isopentenyl diphosphate biosynthesis via DXP pathway; isopentenyl diphosphate from 1-deoxy-D-xylulose 5-phosphate: step 3/6.</text>
</comment>
<comment type="similarity">
    <text evidence="1">Belongs to the GHMP kinase family. IspE subfamily.</text>
</comment>
<reference key="1">
    <citation type="journal article" date="2006" name="J. Bacteriol.">
        <title>The genome sequence of the obligately chemolithoautotrophic, facultatively anaerobic bacterium Thiobacillus denitrificans.</title>
        <authorList>
            <person name="Beller H.R."/>
            <person name="Chain P.S."/>
            <person name="Letain T.E."/>
            <person name="Chakicherla A."/>
            <person name="Larimer F.W."/>
            <person name="Richardson P.M."/>
            <person name="Coleman M.A."/>
            <person name="Wood A.P."/>
            <person name="Kelly D.P."/>
        </authorList>
    </citation>
    <scope>NUCLEOTIDE SEQUENCE [LARGE SCALE GENOMIC DNA]</scope>
    <source>
        <strain>ATCC 25259 / T1</strain>
    </source>
</reference>
<keyword id="KW-0067">ATP-binding</keyword>
<keyword id="KW-0414">Isoprene biosynthesis</keyword>
<keyword id="KW-0418">Kinase</keyword>
<keyword id="KW-0547">Nucleotide-binding</keyword>
<keyword id="KW-1185">Reference proteome</keyword>
<keyword id="KW-0808">Transferase</keyword>